<feature type="chain" id="PRO_1000078057" description="Pantothenate kinase">
    <location>
        <begin position="1"/>
        <end position="317"/>
    </location>
</feature>
<feature type="binding site" evidence="1">
    <location>
        <begin position="99"/>
        <end position="106"/>
    </location>
    <ligand>
        <name>ATP</name>
        <dbReference type="ChEBI" id="CHEBI:30616"/>
    </ligand>
</feature>
<gene>
    <name evidence="1" type="primary">coaA</name>
    <name type="ordered locus">HSM_0064</name>
</gene>
<accession>B0UV22</accession>
<protein>
    <recommendedName>
        <fullName evidence="1">Pantothenate kinase</fullName>
        <ecNumber evidence="1">2.7.1.33</ecNumber>
    </recommendedName>
    <alternativeName>
        <fullName evidence="1">Pantothenic acid kinase</fullName>
    </alternativeName>
</protein>
<reference key="1">
    <citation type="submission" date="2008-02" db="EMBL/GenBank/DDBJ databases">
        <title>Complete sequence of Haemophilus somnus 2336.</title>
        <authorList>
            <consortium name="US DOE Joint Genome Institute"/>
            <person name="Siddaramappa S."/>
            <person name="Duncan A.J."/>
            <person name="Challacombe J.F."/>
            <person name="Rainey D."/>
            <person name="Gillaspy A.F."/>
            <person name="Carson M."/>
            <person name="Gipson J."/>
            <person name="Gipson M."/>
            <person name="Bruce D."/>
            <person name="Detter J.C."/>
            <person name="Han C.S."/>
            <person name="Land M."/>
            <person name="Tapia R."/>
            <person name="Thompson L.S."/>
            <person name="Orvis J."/>
            <person name="Zaitshik J."/>
            <person name="Barnes G."/>
            <person name="Brettin T.S."/>
            <person name="Dyer D.W."/>
            <person name="Inzana T.J."/>
        </authorList>
    </citation>
    <scope>NUCLEOTIDE SEQUENCE [LARGE SCALE GENOMIC DNA]</scope>
    <source>
        <strain>2336</strain>
    </source>
</reference>
<proteinExistence type="inferred from homology"/>
<sequence length="317" mass="36728">MEELNTIKLSDHLTPFLTFNRQQWAELRKSVPLKLTEQDLKPLLGFNEELSLEEVSTIYLPLARLINYYIEENLRRQTVLKRFLSGHNPKVPYIISIAGSVSVGKSTSARILQSLLANWPVARKVDLITTDGFLYPLEILQKKNLLQKKGFPISYDTQRLIRFLADIKSGKKNVKAPIYSHLTYDIIPNQFDIVDRPDILILEGLNVLQIGSNKSNQMFVSDFVDFSIFVDAEEDQLKEWYIKRFLKFCRSAFTDPNSYFKHYANLSEQEAIETASQIWDNINGLNLKQNILPTRERANLILKKGENHKVELVKLRK</sequence>
<name>COAA_HISS2</name>
<dbReference type="EC" id="2.7.1.33" evidence="1"/>
<dbReference type="EMBL" id="CP000947">
    <property type="protein sequence ID" value="ACA32296.1"/>
    <property type="molecule type" value="Genomic_DNA"/>
</dbReference>
<dbReference type="RefSeq" id="WP_012341464.1">
    <property type="nucleotide sequence ID" value="NC_010519.1"/>
</dbReference>
<dbReference type="SMR" id="B0UV22"/>
<dbReference type="STRING" id="228400.HSM_0064"/>
<dbReference type="GeneID" id="31486342"/>
<dbReference type="KEGG" id="hsm:HSM_0064"/>
<dbReference type="HOGENOM" id="CLU_053818_1_1_6"/>
<dbReference type="UniPathway" id="UPA00241">
    <property type="reaction ID" value="UER00352"/>
</dbReference>
<dbReference type="GO" id="GO:0005737">
    <property type="term" value="C:cytoplasm"/>
    <property type="evidence" value="ECO:0007669"/>
    <property type="project" value="UniProtKB-SubCell"/>
</dbReference>
<dbReference type="GO" id="GO:0005524">
    <property type="term" value="F:ATP binding"/>
    <property type="evidence" value="ECO:0007669"/>
    <property type="project" value="UniProtKB-UniRule"/>
</dbReference>
<dbReference type="GO" id="GO:0004594">
    <property type="term" value="F:pantothenate kinase activity"/>
    <property type="evidence" value="ECO:0007669"/>
    <property type="project" value="UniProtKB-UniRule"/>
</dbReference>
<dbReference type="GO" id="GO:0015937">
    <property type="term" value="P:coenzyme A biosynthetic process"/>
    <property type="evidence" value="ECO:0007669"/>
    <property type="project" value="UniProtKB-UniRule"/>
</dbReference>
<dbReference type="CDD" id="cd02025">
    <property type="entry name" value="PanK"/>
    <property type="match status" value="1"/>
</dbReference>
<dbReference type="FunFam" id="3.40.50.300:FF:000242">
    <property type="entry name" value="Pantothenate kinase"/>
    <property type="match status" value="1"/>
</dbReference>
<dbReference type="Gene3D" id="3.40.50.300">
    <property type="entry name" value="P-loop containing nucleotide triphosphate hydrolases"/>
    <property type="match status" value="1"/>
</dbReference>
<dbReference type="HAMAP" id="MF_00215">
    <property type="entry name" value="Pantothen_kinase_1"/>
    <property type="match status" value="1"/>
</dbReference>
<dbReference type="InterPro" id="IPR027417">
    <property type="entry name" value="P-loop_NTPase"/>
</dbReference>
<dbReference type="InterPro" id="IPR004566">
    <property type="entry name" value="PanK"/>
</dbReference>
<dbReference type="InterPro" id="IPR006083">
    <property type="entry name" value="PRK/URK"/>
</dbReference>
<dbReference type="NCBIfam" id="TIGR00554">
    <property type="entry name" value="panK_bact"/>
    <property type="match status" value="1"/>
</dbReference>
<dbReference type="PANTHER" id="PTHR10285">
    <property type="entry name" value="URIDINE KINASE"/>
    <property type="match status" value="1"/>
</dbReference>
<dbReference type="Pfam" id="PF00485">
    <property type="entry name" value="PRK"/>
    <property type="match status" value="1"/>
</dbReference>
<dbReference type="PIRSF" id="PIRSF000545">
    <property type="entry name" value="Pantothenate_kin"/>
    <property type="match status" value="1"/>
</dbReference>
<dbReference type="SUPFAM" id="SSF52540">
    <property type="entry name" value="P-loop containing nucleoside triphosphate hydrolases"/>
    <property type="match status" value="1"/>
</dbReference>
<keyword id="KW-0067">ATP-binding</keyword>
<keyword id="KW-0173">Coenzyme A biosynthesis</keyword>
<keyword id="KW-0963">Cytoplasm</keyword>
<keyword id="KW-0418">Kinase</keyword>
<keyword id="KW-0547">Nucleotide-binding</keyword>
<keyword id="KW-0808">Transferase</keyword>
<evidence type="ECO:0000255" key="1">
    <source>
        <dbReference type="HAMAP-Rule" id="MF_00215"/>
    </source>
</evidence>
<organism>
    <name type="scientific">Histophilus somni (strain 2336)</name>
    <name type="common">Haemophilus somnus</name>
    <dbReference type="NCBI Taxonomy" id="228400"/>
    <lineage>
        <taxon>Bacteria</taxon>
        <taxon>Pseudomonadati</taxon>
        <taxon>Pseudomonadota</taxon>
        <taxon>Gammaproteobacteria</taxon>
        <taxon>Pasteurellales</taxon>
        <taxon>Pasteurellaceae</taxon>
        <taxon>Histophilus</taxon>
    </lineage>
</organism>
<comment type="catalytic activity">
    <reaction evidence="1">
        <text>(R)-pantothenate + ATP = (R)-4'-phosphopantothenate + ADP + H(+)</text>
        <dbReference type="Rhea" id="RHEA:16373"/>
        <dbReference type="ChEBI" id="CHEBI:10986"/>
        <dbReference type="ChEBI" id="CHEBI:15378"/>
        <dbReference type="ChEBI" id="CHEBI:29032"/>
        <dbReference type="ChEBI" id="CHEBI:30616"/>
        <dbReference type="ChEBI" id="CHEBI:456216"/>
        <dbReference type="EC" id="2.7.1.33"/>
    </reaction>
</comment>
<comment type="pathway">
    <text evidence="1">Cofactor biosynthesis; coenzyme A biosynthesis; CoA from (R)-pantothenate: step 1/5.</text>
</comment>
<comment type="subcellular location">
    <subcellularLocation>
        <location evidence="1">Cytoplasm</location>
    </subcellularLocation>
</comment>
<comment type="similarity">
    <text evidence="1">Belongs to the prokaryotic pantothenate kinase family.</text>
</comment>